<gene>
    <name type="primary">ZNF439</name>
</gene>
<dbReference type="EMBL" id="AL833935">
    <property type="protein sequence ID" value="CAD38790.1"/>
    <property type="molecule type" value="mRNA"/>
</dbReference>
<dbReference type="EMBL" id="AK027542">
    <property type="protein sequence ID" value="BAB55187.1"/>
    <property type="status" value="ALT_INIT"/>
    <property type="molecule type" value="mRNA"/>
</dbReference>
<dbReference type="EMBL" id="BC032857">
    <property type="protein sequence ID" value="AAH32857.1"/>
    <property type="molecule type" value="mRNA"/>
</dbReference>
<dbReference type="CCDS" id="CCDS12268.1"/>
<dbReference type="RefSeq" id="NP_001335653.1">
    <property type="nucleotide sequence ID" value="NM_001348724.1"/>
</dbReference>
<dbReference type="RefSeq" id="NP_001335654.1">
    <property type="nucleotide sequence ID" value="NM_001348725.1"/>
</dbReference>
<dbReference type="RefSeq" id="NP_689475.1">
    <property type="nucleotide sequence ID" value="NM_152262.3"/>
</dbReference>
<dbReference type="RefSeq" id="XP_047295607.1">
    <property type="nucleotide sequence ID" value="XM_047439651.1"/>
</dbReference>
<dbReference type="RefSeq" id="XP_054178531.1">
    <property type="nucleotide sequence ID" value="XM_054322556.1"/>
</dbReference>
<dbReference type="SMR" id="Q8NDP4"/>
<dbReference type="BioGRID" id="124741">
    <property type="interactions" value="26"/>
</dbReference>
<dbReference type="FunCoup" id="Q8NDP4">
    <property type="interactions" value="38"/>
</dbReference>
<dbReference type="IntAct" id="Q8NDP4">
    <property type="interactions" value="23"/>
</dbReference>
<dbReference type="MINT" id="Q8NDP4"/>
<dbReference type="STRING" id="9606.ENSP00000305077"/>
<dbReference type="iPTMnet" id="Q8NDP4"/>
<dbReference type="PhosphoSitePlus" id="Q8NDP4"/>
<dbReference type="BioMuta" id="ZNF439"/>
<dbReference type="DMDM" id="30580628"/>
<dbReference type="jPOST" id="Q8NDP4"/>
<dbReference type="MassIVE" id="Q8NDP4"/>
<dbReference type="PaxDb" id="9606-ENSP00000305077"/>
<dbReference type="PeptideAtlas" id="Q8NDP4"/>
<dbReference type="ProteomicsDB" id="73047"/>
<dbReference type="Antibodypedia" id="53866">
    <property type="antibodies" value="14 antibodies from 7 providers"/>
</dbReference>
<dbReference type="DNASU" id="90594"/>
<dbReference type="Ensembl" id="ENST00000304030.2">
    <property type="protein sequence ID" value="ENSP00000305077.2"/>
    <property type="gene ID" value="ENSG00000171291.9"/>
</dbReference>
<dbReference type="GeneID" id="90594"/>
<dbReference type="KEGG" id="hsa:90594"/>
<dbReference type="UCSC" id="uc002msr.4">
    <property type="organism name" value="human"/>
</dbReference>
<dbReference type="AGR" id="HGNC:20873"/>
<dbReference type="CTD" id="90594"/>
<dbReference type="DisGeNET" id="90594"/>
<dbReference type="GeneCards" id="ZNF439"/>
<dbReference type="HGNC" id="HGNC:20873">
    <property type="gene designation" value="ZNF439"/>
</dbReference>
<dbReference type="HPA" id="ENSG00000171291">
    <property type="expression patterns" value="Low tissue specificity"/>
</dbReference>
<dbReference type="neXtProt" id="NX_Q8NDP4"/>
<dbReference type="OpenTargets" id="ENSG00000171291"/>
<dbReference type="PharmGKB" id="PA134886330"/>
<dbReference type="VEuPathDB" id="HostDB:ENSG00000171291"/>
<dbReference type="eggNOG" id="KOG1721">
    <property type="taxonomic scope" value="Eukaryota"/>
</dbReference>
<dbReference type="GeneTree" id="ENSGT00940000163273"/>
<dbReference type="HOGENOM" id="CLU_002678_44_5_1"/>
<dbReference type="InParanoid" id="Q8NDP4"/>
<dbReference type="OMA" id="QIHENTH"/>
<dbReference type="OrthoDB" id="9517983at2759"/>
<dbReference type="PAN-GO" id="Q8NDP4">
    <property type="GO annotations" value="3 GO annotations based on evolutionary models"/>
</dbReference>
<dbReference type="PhylomeDB" id="Q8NDP4"/>
<dbReference type="TreeFam" id="TF338854"/>
<dbReference type="PathwayCommons" id="Q8NDP4"/>
<dbReference type="Reactome" id="R-HSA-212436">
    <property type="pathway name" value="Generic Transcription Pathway"/>
</dbReference>
<dbReference type="SignaLink" id="Q8NDP4"/>
<dbReference type="BioGRID-ORCS" id="90594">
    <property type="hits" value="5 hits in 1096 CRISPR screens"/>
</dbReference>
<dbReference type="ChiTaRS" id="ZNF439">
    <property type="organism name" value="human"/>
</dbReference>
<dbReference type="GenomeRNAi" id="90594"/>
<dbReference type="Pharos" id="Q8NDP4">
    <property type="development level" value="Tdark"/>
</dbReference>
<dbReference type="PRO" id="PR:Q8NDP4"/>
<dbReference type="Proteomes" id="UP000005640">
    <property type="component" value="Chromosome 19"/>
</dbReference>
<dbReference type="RNAct" id="Q8NDP4">
    <property type="molecule type" value="protein"/>
</dbReference>
<dbReference type="Bgee" id="ENSG00000171291">
    <property type="expression patterns" value="Expressed in cortical plate and 131 other cell types or tissues"/>
</dbReference>
<dbReference type="ExpressionAtlas" id="Q8NDP4">
    <property type="expression patterns" value="baseline and differential"/>
</dbReference>
<dbReference type="GO" id="GO:0005634">
    <property type="term" value="C:nucleus"/>
    <property type="evidence" value="ECO:0000318"/>
    <property type="project" value="GO_Central"/>
</dbReference>
<dbReference type="GO" id="GO:0000981">
    <property type="term" value="F:DNA-binding transcription factor activity, RNA polymerase II-specific"/>
    <property type="evidence" value="ECO:0000318"/>
    <property type="project" value="GO_Central"/>
</dbReference>
<dbReference type="GO" id="GO:0000977">
    <property type="term" value="F:RNA polymerase II transcription regulatory region sequence-specific DNA binding"/>
    <property type="evidence" value="ECO:0000318"/>
    <property type="project" value="GO_Central"/>
</dbReference>
<dbReference type="GO" id="GO:0008270">
    <property type="term" value="F:zinc ion binding"/>
    <property type="evidence" value="ECO:0007669"/>
    <property type="project" value="UniProtKB-KW"/>
</dbReference>
<dbReference type="GO" id="GO:0006357">
    <property type="term" value="P:regulation of transcription by RNA polymerase II"/>
    <property type="evidence" value="ECO:0000318"/>
    <property type="project" value="GO_Central"/>
</dbReference>
<dbReference type="CDD" id="cd07765">
    <property type="entry name" value="KRAB_A-box"/>
    <property type="match status" value="1"/>
</dbReference>
<dbReference type="FunFam" id="3.30.160.60:FF:003708">
    <property type="match status" value="1"/>
</dbReference>
<dbReference type="FunFam" id="3.30.160.60:FF:000240">
    <property type="entry name" value="Zinc finger protein 250"/>
    <property type="match status" value="2"/>
</dbReference>
<dbReference type="FunFam" id="3.30.160.60:FF:000184">
    <property type="entry name" value="Zinc finger protein 333"/>
    <property type="match status" value="3"/>
</dbReference>
<dbReference type="FunFam" id="3.30.160.60:FF:002254">
    <property type="entry name" value="Zinc finger protein 540"/>
    <property type="match status" value="2"/>
</dbReference>
<dbReference type="FunFam" id="3.30.160.60:FF:002244">
    <property type="entry name" value="Zinc finger protein 625"/>
    <property type="match status" value="1"/>
</dbReference>
<dbReference type="FunFam" id="3.30.160.60:FF:001544">
    <property type="entry name" value="Zinc finger protein 69"/>
    <property type="match status" value="1"/>
</dbReference>
<dbReference type="FunFam" id="3.30.160.60:FF:002288">
    <property type="entry name" value="Zinc finger protein 700"/>
    <property type="match status" value="1"/>
</dbReference>
<dbReference type="Gene3D" id="6.10.140.140">
    <property type="match status" value="1"/>
</dbReference>
<dbReference type="Gene3D" id="3.30.160.60">
    <property type="entry name" value="Classic Zinc Finger"/>
    <property type="match status" value="12"/>
</dbReference>
<dbReference type="InterPro" id="IPR001909">
    <property type="entry name" value="KRAB"/>
</dbReference>
<dbReference type="InterPro" id="IPR036051">
    <property type="entry name" value="KRAB_dom_sf"/>
</dbReference>
<dbReference type="InterPro" id="IPR036236">
    <property type="entry name" value="Znf_C2H2_sf"/>
</dbReference>
<dbReference type="InterPro" id="IPR013087">
    <property type="entry name" value="Znf_C2H2_type"/>
</dbReference>
<dbReference type="PANTHER" id="PTHR24393">
    <property type="entry name" value="ZINC FINGER PROTEIN"/>
    <property type="match status" value="1"/>
</dbReference>
<dbReference type="PANTHER" id="PTHR24393:SF142">
    <property type="entry name" value="ZINC FINGER PROTEIN 709-LIKE"/>
    <property type="match status" value="1"/>
</dbReference>
<dbReference type="Pfam" id="PF01352">
    <property type="entry name" value="KRAB"/>
    <property type="match status" value="1"/>
</dbReference>
<dbReference type="Pfam" id="PF00096">
    <property type="entry name" value="zf-C2H2"/>
    <property type="match status" value="6"/>
</dbReference>
<dbReference type="SMART" id="SM00349">
    <property type="entry name" value="KRAB"/>
    <property type="match status" value="1"/>
</dbReference>
<dbReference type="SMART" id="SM00355">
    <property type="entry name" value="ZnF_C2H2"/>
    <property type="match status" value="11"/>
</dbReference>
<dbReference type="SUPFAM" id="SSF57667">
    <property type="entry name" value="beta-beta-alpha zinc fingers"/>
    <property type="match status" value="6"/>
</dbReference>
<dbReference type="SUPFAM" id="SSF109640">
    <property type="entry name" value="KRAB domain (Kruppel-associated box)"/>
    <property type="match status" value="1"/>
</dbReference>
<dbReference type="PROSITE" id="PS50805">
    <property type="entry name" value="KRAB"/>
    <property type="match status" value="1"/>
</dbReference>
<dbReference type="PROSITE" id="PS00028">
    <property type="entry name" value="ZINC_FINGER_C2H2_1"/>
    <property type="match status" value="11"/>
</dbReference>
<dbReference type="PROSITE" id="PS50157">
    <property type="entry name" value="ZINC_FINGER_C2H2_2"/>
    <property type="match status" value="11"/>
</dbReference>
<name>ZN439_HUMAN</name>
<feature type="chain" id="PRO_0000047588" description="Zinc finger protein 439">
    <location>
        <begin position="1"/>
        <end position="499"/>
    </location>
</feature>
<feature type="domain" description="KRAB" evidence="2">
    <location>
        <begin position="19"/>
        <end position="101"/>
    </location>
</feature>
<feature type="zinc finger region" description="C2H2-type 1" evidence="1">
    <location>
        <begin position="186"/>
        <end position="208"/>
    </location>
</feature>
<feature type="zinc finger region" description="C2H2-type 2" evidence="1">
    <location>
        <begin position="214"/>
        <end position="236"/>
    </location>
</feature>
<feature type="zinc finger region" description="C2H2-type 3" evidence="1">
    <location>
        <begin position="242"/>
        <end position="264"/>
    </location>
</feature>
<feature type="zinc finger region" description="C2H2-type 4" evidence="1">
    <location>
        <begin position="270"/>
        <end position="292"/>
    </location>
</feature>
<feature type="zinc finger region" description="C2H2-type 5" evidence="1">
    <location>
        <begin position="298"/>
        <end position="320"/>
    </location>
</feature>
<feature type="zinc finger region" description="C2H2-type 6" evidence="1">
    <location>
        <begin position="326"/>
        <end position="348"/>
    </location>
</feature>
<feature type="zinc finger region" description="C2H2-type 7" evidence="1">
    <location>
        <begin position="354"/>
        <end position="376"/>
    </location>
</feature>
<feature type="zinc finger region" description="C2H2-type 8" evidence="1">
    <location>
        <begin position="382"/>
        <end position="404"/>
    </location>
</feature>
<feature type="zinc finger region" description="C2H2-type 9" evidence="1">
    <location>
        <begin position="410"/>
        <end position="432"/>
    </location>
</feature>
<feature type="zinc finger region" description="C2H2-type 10" evidence="1">
    <location>
        <begin position="438"/>
        <end position="460"/>
    </location>
</feature>
<feature type="zinc finger region" description="C2H2-type 11" evidence="1">
    <location>
        <begin position="466"/>
        <end position="490"/>
    </location>
</feature>
<feature type="sequence variant" id="VAR_052827" description="In dbSNP:rs10421552.">
    <original>P</original>
    <variation>S</variation>
    <location>
        <position position="6"/>
    </location>
</feature>
<feature type="sequence variant" id="VAR_024216" description="In dbSNP:rs10500209." evidence="3">
    <original>L</original>
    <variation>S</variation>
    <location>
        <position position="427"/>
    </location>
</feature>
<proteinExistence type="evidence at protein level"/>
<organism>
    <name type="scientific">Homo sapiens</name>
    <name type="common">Human</name>
    <dbReference type="NCBI Taxonomy" id="9606"/>
    <lineage>
        <taxon>Eukaryota</taxon>
        <taxon>Metazoa</taxon>
        <taxon>Chordata</taxon>
        <taxon>Craniata</taxon>
        <taxon>Vertebrata</taxon>
        <taxon>Euteleostomi</taxon>
        <taxon>Mammalia</taxon>
        <taxon>Eutheria</taxon>
        <taxon>Euarchontoglires</taxon>
        <taxon>Primates</taxon>
        <taxon>Haplorrhini</taxon>
        <taxon>Catarrhini</taxon>
        <taxon>Hominidae</taxon>
        <taxon>Homo</taxon>
    </lineage>
</organism>
<accession>Q8NDP4</accession>
<accession>Q8IYZ7</accession>
<accession>Q96SU1</accession>
<keyword id="KW-0238">DNA-binding</keyword>
<keyword id="KW-0479">Metal-binding</keyword>
<keyword id="KW-0539">Nucleus</keyword>
<keyword id="KW-1267">Proteomics identification</keyword>
<keyword id="KW-1185">Reference proteome</keyword>
<keyword id="KW-0677">Repeat</keyword>
<keyword id="KW-0804">Transcription</keyword>
<keyword id="KW-0805">Transcription regulation</keyword>
<keyword id="KW-0862">Zinc</keyword>
<keyword id="KW-0863">Zinc-finger</keyword>
<protein>
    <recommendedName>
        <fullName>Zinc finger protein 439</fullName>
    </recommendedName>
</protein>
<evidence type="ECO:0000255" key="1">
    <source>
        <dbReference type="PROSITE-ProRule" id="PRU00042"/>
    </source>
</evidence>
<evidence type="ECO:0000255" key="2">
    <source>
        <dbReference type="PROSITE-ProRule" id="PRU00119"/>
    </source>
</evidence>
<evidence type="ECO:0000269" key="3">
    <source>
    </source>
</evidence>
<evidence type="ECO:0000305" key="4"/>
<reference key="1">
    <citation type="journal article" date="2007" name="BMC Genomics">
        <title>The full-ORF clone resource of the German cDNA consortium.</title>
        <authorList>
            <person name="Bechtel S."/>
            <person name="Rosenfelder H."/>
            <person name="Duda A."/>
            <person name="Schmidt C.P."/>
            <person name="Ernst U."/>
            <person name="Wellenreuther R."/>
            <person name="Mehrle A."/>
            <person name="Schuster C."/>
            <person name="Bahr A."/>
            <person name="Bloecker H."/>
            <person name="Heubner D."/>
            <person name="Hoerlein A."/>
            <person name="Michel G."/>
            <person name="Wedler H."/>
            <person name="Koehrer K."/>
            <person name="Ottenwaelder B."/>
            <person name="Poustka A."/>
            <person name="Wiemann S."/>
            <person name="Schupp I."/>
        </authorList>
    </citation>
    <scope>NUCLEOTIDE SEQUENCE [LARGE SCALE MRNA]</scope>
    <source>
        <tissue>Substantia nigra</tissue>
    </source>
</reference>
<reference key="2">
    <citation type="journal article" date="2004" name="Nat. Genet.">
        <title>Complete sequencing and characterization of 21,243 full-length human cDNAs.</title>
        <authorList>
            <person name="Ota T."/>
            <person name="Suzuki Y."/>
            <person name="Nishikawa T."/>
            <person name="Otsuki T."/>
            <person name="Sugiyama T."/>
            <person name="Irie R."/>
            <person name="Wakamatsu A."/>
            <person name="Hayashi K."/>
            <person name="Sato H."/>
            <person name="Nagai K."/>
            <person name="Kimura K."/>
            <person name="Makita H."/>
            <person name="Sekine M."/>
            <person name="Obayashi M."/>
            <person name="Nishi T."/>
            <person name="Shibahara T."/>
            <person name="Tanaka T."/>
            <person name="Ishii S."/>
            <person name="Yamamoto J."/>
            <person name="Saito K."/>
            <person name="Kawai Y."/>
            <person name="Isono Y."/>
            <person name="Nakamura Y."/>
            <person name="Nagahari K."/>
            <person name="Murakami K."/>
            <person name="Yasuda T."/>
            <person name="Iwayanagi T."/>
            <person name="Wagatsuma M."/>
            <person name="Shiratori A."/>
            <person name="Sudo H."/>
            <person name="Hosoiri T."/>
            <person name="Kaku Y."/>
            <person name="Kodaira H."/>
            <person name="Kondo H."/>
            <person name="Sugawara M."/>
            <person name="Takahashi M."/>
            <person name="Kanda K."/>
            <person name="Yokoi T."/>
            <person name="Furuya T."/>
            <person name="Kikkawa E."/>
            <person name="Omura Y."/>
            <person name="Abe K."/>
            <person name="Kamihara K."/>
            <person name="Katsuta N."/>
            <person name="Sato K."/>
            <person name="Tanikawa M."/>
            <person name="Yamazaki M."/>
            <person name="Ninomiya K."/>
            <person name="Ishibashi T."/>
            <person name="Yamashita H."/>
            <person name="Murakawa K."/>
            <person name="Fujimori K."/>
            <person name="Tanai H."/>
            <person name="Kimata M."/>
            <person name="Watanabe M."/>
            <person name="Hiraoka S."/>
            <person name="Chiba Y."/>
            <person name="Ishida S."/>
            <person name="Ono Y."/>
            <person name="Takiguchi S."/>
            <person name="Watanabe S."/>
            <person name="Yosida M."/>
            <person name="Hotuta T."/>
            <person name="Kusano J."/>
            <person name="Kanehori K."/>
            <person name="Takahashi-Fujii A."/>
            <person name="Hara H."/>
            <person name="Tanase T.-O."/>
            <person name="Nomura Y."/>
            <person name="Togiya S."/>
            <person name="Komai F."/>
            <person name="Hara R."/>
            <person name="Takeuchi K."/>
            <person name="Arita M."/>
            <person name="Imose N."/>
            <person name="Musashino K."/>
            <person name="Yuuki H."/>
            <person name="Oshima A."/>
            <person name="Sasaki N."/>
            <person name="Aotsuka S."/>
            <person name="Yoshikawa Y."/>
            <person name="Matsunawa H."/>
            <person name="Ichihara T."/>
            <person name="Shiohata N."/>
            <person name="Sano S."/>
            <person name="Moriya S."/>
            <person name="Momiyama H."/>
            <person name="Satoh N."/>
            <person name="Takami S."/>
            <person name="Terashima Y."/>
            <person name="Suzuki O."/>
            <person name="Nakagawa S."/>
            <person name="Senoh A."/>
            <person name="Mizoguchi H."/>
            <person name="Goto Y."/>
            <person name="Shimizu F."/>
            <person name="Wakebe H."/>
            <person name="Hishigaki H."/>
            <person name="Watanabe T."/>
            <person name="Sugiyama A."/>
            <person name="Takemoto M."/>
            <person name="Kawakami B."/>
            <person name="Yamazaki M."/>
            <person name="Watanabe K."/>
            <person name="Kumagai A."/>
            <person name="Itakura S."/>
            <person name="Fukuzumi Y."/>
            <person name="Fujimori Y."/>
            <person name="Komiyama M."/>
            <person name="Tashiro H."/>
            <person name="Tanigami A."/>
            <person name="Fujiwara T."/>
            <person name="Ono T."/>
            <person name="Yamada K."/>
            <person name="Fujii Y."/>
            <person name="Ozaki K."/>
            <person name="Hirao M."/>
            <person name="Ohmori Y."/>
            <person name="Kawabata A."/>
            <person name="Hikiji T."/>
            <person name="Kobatake N."/>
            <person name="Inagaki H."/>
            <person name="Ikema Y."/>
            <person name="Okamoto S."/>
            <person name="Okitani R."/>
            <person name="Kawakami T."/>
            <person name="Noguchi S."/>
            <person name="Itoh T."/>
            <person name="Shigeta K."/>
            <person name="Senba T."/>
            <person name="Matsumura K."/>
            <person name="Nakajima Y."/>
            <person name="Mizuno T."/>
            <person name="Morinaga M."/>
            <person name="Sasaki M."/>
            <person name="Togashi T."/>
            <person name="Oyama M."/>
            <person name="Hata H."/>
            <person name="Watanabe M."/>
            <person name="Komatsu T."/>
            <person name="Mizushima-Sugano J."/>
            <person name="Satoh T."/>
            <person name="Shirai Y."/>
            <person name="Takahashi Y."/>
            <person name="Nakagawa K."/>
            <person name="Okumura K."/>
            <person name="Nagase T."/>
            <person name="Nomura N."/>
            <person name="Kikuchi H."/>
            <person name="Masuho Y."/>
            <person name="Yamashita R."/>
            <person name="Nakai K."/>
            <person name="Yada T."/>
            <person name="Nakamura Y."/>
            <person name="Ohara O."/>
            <person name="Isogai T."/>
            <person name="Sugano S."/>
        </authorList>
    </citation>
    <scope>NUCLEOTIDE SEQUENCE [LARGE SCALE MRNA] OF 83-499</scope>
</reference>
<reference key="3">
    <citation type="journal article" date="2004" name="Genome Res.">
        <title>The status, quality, and expansion of the NIH full-length cDNA project: the Mammalian Gene Collection (MGC).</title>
        <authorList>
            <consortium name="The MGC Project Team"/>
        </authorList>
    </citation>
    <scope>NUCLEOTIDE SEQUENCE [LARGE SCALE MRNA] OF 137-499</scope>
    <scope>VARIANT SER-427</scope>
    <source>
        <tissue>Testis</tissue>
    </source>
</reference>
<sequence>MLSLSPILLYTCEMFQDPVAFKDVAVNFTQEEWALLDISQKNLYREVMLETFWNLTSIGKKWKDQNIEYEYQNPRRNFRSVTEEKVNEIKEDSHCGETFTPVPDDRLNFQKKKASPEVKSCDSFVCEVGLGNSSSNMNIRGDTGHKACECQEYGPKPWKSQQPKKAFRYHPSLRTQERDHTGKKPYACKECGKNIIYHSSIQRHMVVHSGDGPYKCKFCGKAFHCLSLYLIHERTHTGEKPYECKQCGKSFSYSATHRIHERTHIGEKPYECQECGKAFHSPRSCHRHERSHMGEKAYQCKECGKAFMCPRYVRRHERTHSRKKLYECKQCGKALSSLTSFQTHIRMHSGERPYECKTCGKGFYSAKSFQRHEKTHSGEKPYKCKQCGKAFTRSGSFRYHERTHTGEKPYECKQCGKAFRSAPNLQLHGRTHTGEKPYQCKECGKAFRSASQLRIHRRIHTGEKPYECKKCGKAFRYVQNFRFHERTQTHKNALWRKTL</sequence>
<comment type="function">
    <text>May be involved in transcriptional regulation.</text>
</comment>
<comment type="interaction">
    <interactant intactId="EBI-747580">
        <id>Q8NDP4</id>
    </interactant>
    <interactant intactId="EBI-3866279">
        <id>Q9BWT7</id>
        <label>CARD10</label>
    </interactant>
    <organismsDiffer>false</organismsDiffer>
    <experiments>3</experiments>
</comment>
<comment type="interaction">
    <interactant intactId="EBI-747580">
        <id>Q8NDP4</id>
    </interactant>
    <interactant intactId="EBI-748961">
        <id>O95273</id>
        <label>CCNDBP1</label>
    </interactant>
    <organismsDiffer>false</organismsDiffer>
    <experiments>3</experiments>
</comment>
<comment type="interaction">
    <interactant intactId="EBI-747580">
        <id>Q8NDP4</id>
    </interactant>
    <interactant intactId="EBI-739624">
        <id>Q8NHQ1</id>
        <label>CEP70</label>
    </interactant>
    <organismsDiffer>false</organismsDiffer>
    <experiments>3</experiments>
</comment>
<comment type="interaction">
    <interactant intactId="EBI-747580">
        <id>Q8NDP4</id>
    </interactant>
    <interactant intactId="EBI-3867333">
        <id>A8MQ03</id>
        <label>CYSRT1</label>
    </interactant>
    <organismsDiffer>false</organismsDiffer>
    <experiments>3</experiments>
</comment>
<comment type="interaction">
    <interactant intactId="EBI-747580">
        <id>Q8NDP4</id>
    </interactant>
    <interactant intactId="EBI-371669">
        <id>O75496</id>
        <label>GMNN</label>
    </interactant>
    <organismsDiffer>false</organismsDiffer>
    <experiments>7</experiments>
</comment>
<comment type="interaction">
    <interactant intactId="EBI-747580">
        <id>Q8NDP4</id>
    </interactant>
    <interactant intactId="EBI-10171697">
        <id>Q6A162</id>
        <label>KRT40</label>
    </interactant>
    <organismsDiffer>false</organismsDiffer>
    <experiments>6</experiments>
</comment>
<comment type="interaction">
    <interactant intactId="EBI-747580">
        <id>Q8NDP4</id>
    </interactant>
    <interactant intactId="EBI-11959885">
        <id>Q07627</id>
        <label>KRTAP1-1</label>
    </interactant>
    <organismsDiffer>false</organismsDiffer>
    <experiments>3</experiments>
</comment>
<comment type="interaction">
    <interactant intactId="EBI-747580">
        <id>Q8NDP4</id>
    </interactant>
    <interactant intactId="EBI-10172150">
        <id>P60370</id>
        <label>KRTAP10-5</label>
    </interactant>
    <organismsDiffer>false</organismsDiffer>
    <experiments>3</experiments>
</comment>
<comment type="interaction">
    <interactant intactId="EBI-747580">
        <id>Q8NDP4</id>
    </interactant>
    <interactant intactId="EBI-10172290">
        <id>P60409</id>
        <label>KRTAP10-7</label>
    </interactant>
    <organismsDiffer>false</organismsDiffer>
    <experiments>3</experiments>
</comment>
<comment type="interaction">
    <interactant intactId="EBI-747580">
        <id>Q8NDP4</id>
    </interactant>
    <interactant intactId="EBI-10171774">
        <id>P60410</id>
        <label>KRTAP10-8</label>
    </interactant>
    <organismsDiffer>false</organismsDiffer>
    <experiments>6</experiments>
</comment>
<comment type="interaction">
    <interactant intactId="EBI-747580">
        <id>Q8NDP4</id>
    </interactant>
    <interactant intactId="EBI-10172052">
        <id>P60411</id>
        <label>KRTAP10-9</label>
    </interactant>
    <organismsDiffer>false</organismsDiffer>
    <experiments>3</experiments>
</comment>
<comment type="interaction">
    <interactant intactId="EBI-747580">
        <id>Q8NDP4</id>
    </interactant>
    <interactant intactId="EBI-11953334">
        <id>P60328</id>
        <label>KRTAP12-3</label>
    </interactant>
    <organismsDiffer>false</organismsDiffer>
    <experiments>3</experiments>
</comment>
<comment type="interaction">
    <interactant intactId="EBI-747580">
        <id>Q8NDP4</id>
    </interactant>
    <interactant intactId="EBI-3958099">
        <id>P26371</id>
        <label>KRTAP5-9</label>
    </interactant>
    <organismsDiffer>false</organismsDiffer>
    <experiments>6</experiments>
</comment>
<comment type="interaction">
    <interactant intactId="EBI-747580">
        <id>Q8NDP4</id>
    </interactant>
    <interactant intactId="EBI-1043191">
        <id>Q9BYQ3</id>
        <label>KRTAP9-3</label>
    </interactant>
    <organismsDiffer>false</organismsDiffer>
    <experiments>3</experiments>
</comment>
<comment type="interaction">
    <interactant intactId="EBI-747580">
        <id>Q8NDP4</id>
    </interactant>
    <interactant intactId="EBI-724076">
        <id>Q99750</id>
        <label>MDFI</label>
    </interactant>
    <organismsDiffer>false</organismsDiffer>
    <experiments>8</experiments>
</comment>
<comment type="interaction">
    <interactant intactId="EBI-747580">
        <id>Q8NDP4</id>
    </interactant>
    <interactant intactId="EBI-742948">
        <id>Q5JR59</id>
        <label>MTUS2</label>
    </interactant>
    <organismsDiffer>false</organismsDiffer>
    <experiments>4</experiments>
</comment>
<comment type="interaction">
    <interactant intactId="EBI-747580">
        <id>Q8NDP4</id>
    </interactant>
    <interactant intactId="EBI-11522433">
        <id>Q5JR59-3</id>
        <label>MTUS2</label>
    </interactant>
    <organismsDiffer>false</organismsDiffer>
    <experiments>3</experiments>
</comment>
<comment type="interaction">
    <interactant intactId="EBI-747580">
        <id>Q8NDP4</id>
    </interactant>
    <interactant intactId="EBI-945833">
        <id>Q7Z3S9</id>
        <label>NOTCH2NLA</label>
    </interactant>
    <organismsDiffer>false</organismsDiffer>
    <experiments>3</experiments>
</comment>
<comment type="interaction">
    <interactant intactId="EBI-747580">
        <id>Q8NDP4</id>
    </interactant>
    <interactant intactId="EBI-742388">
        <id>Q9H8W4</id>
        <label>PLEKHF2</label>
    </interactant>
    <organismsDiffer>false</organismsDiffer>
    <experiments>3</experiments>
</comment>
<comment type="interaction">
    <interactant intactId="EBI-747580">
        <id>Q8NDP4</id>
    </interactant>
    <interactant intactId="EBI-725997">
        <id>Q8WV44</id>
        <label>TRIM41</label>
    </interactant>
    <organismsDiffer>false</organismsDiffer>
    <experiments>3</experiments>
</comment>
<comment type="subcellular location">
    <subcellularLocation>
        <location evidence="4">Nucleus</location>
    </subcellularLocation>
</comment>
<comment type="similarity">
    <text evidence="4">Belongs to the krueppel C2H2-type zinc-finger protein family.</text>
</comment>
<comment type="sequence caution" evidence="4">
    <conflict type="erroneous initiation">
        <sequence resource="EMBL-CDS" id="BAB55187"/>
    </conflict>
</comment>